<accession>Q97UZ1</accession>
<dbReference type="EMBL" id="AE006641">
    <property type="protein sequence ID" value="AAK42957.1"/>
    <property type="molecule type" value="Genomic_DNA"/>
</dbReference>
<dbReference type="PIR" id="F90462">
    <property type="entry name" value="F90462"/>
</dbReference>
<dbReference type="RefSeq" id="WP_010923998.1">
    <property type="nucleotide sequence ID" value="NC_002754.1"/>
</dbReference>
<dbReference type="SMR" id="Q97UZ1"/>
<dbReference type="FunCoup" id="Q97UZ1">
    <property type="interactions" value="30"/>
</dbReference>
<dbReference type="STRING" id="273057.SSO2847"/>
<dbReference type="TCDB" id="3.A.1.1.13">
    <property type="family name" value="the atp-binding cassette (abc) superfamily"/>
</dbReference>
<dbReference type="PaxDb" id="273057-SSO2847"/>
<dbReference type="EnsemblBacteria" id="AAK42957">
    <property type="protein sequence ID" value="AAK42957"/>
    <property type="gene ID" value="SSO2847"/>
</dbReference>
<dbReference type="GeneID" id="1452876"/>
<dbReference type="GeneID" id="27429113"/>
<dbReference type="KEGG" id="sso:SSO2847"/>
<dbReference type="PATRIC" id="fig|273057.12.peg.2932"/>
<dbReference type="eggNOG" id="arCOG00150">
    <property type="taxonomic scope" value="Archaea"/>
</dbReference>
<dbReference type="HOGENOM" id="CLU_491464_0_0_2"/>
<dbReference type="InParanoid" id="Q97UZ1"/>
<dbReference type="PhylomeDB" id="Q97UZ1"/>
<dbReference type="Proteomes" id="UP000001974">
    <property type="component" value="Chromosome"/>
</dbReference>
<dbReference type="GO" id="GO:0005886">
    <property type="term" value="C:plasma membrane"/>
    <property type="evidence" value="ECO:0007669"/>
    <property type="project" value="UniProtKB-SubCell"/>
</dbReference>
<dbReference type="Gene3D" id="3.40.190.10">
    <property type="entry name" value="Periplasmic binding protein-like II"/>
    <property type="match status" value="2"/>
</dbReference>
<dbReference type="InterPro" id="IPR050490">
    <property type="entry name" value="Bact_solute-bd_prot1"/>
</dbReference>
<dbReference type="InterPro" id="IPR054925">
    <property type="entry name" value="GlcS_GBP"/>
</dbReference>
<dbReference type="NCBIfam" id="NF040930">
    <property type="entry name" value="ABC_arch_GlcS"/>
    <property type="match status" value="1"/>
</dbReference>
<dbReference type="PANTHER" id="PTHR43649">
    <property type="entry name" value="ARABINOSE-BINDING PROTEIN-RELATED"/>
    <property type="match status" value="1"/>
</dbReference>
<dbReference type="PANTHER" id="PTHR43649:SF29">
    <property type="entry name" value="OSMOPROTECTIVE COMPOUNDS-BINDING PROTEIN GGTB"/>
    <property type="match status" value="1"/>
</dbReference>
<dbReference type="SUPFAM" id="SSF53850">
    <property type="entry name" value="Periplasmic binding protein-like II"/>
    <property type="match status" value="1"/>
</dbReference>
<reference key="1">
    <citation type="journal article" date="2001" name="Proc. Natl. Acad. Sci. U.S.A.">
        <title>The complete genome of the crenarchaeon Sulfolobus solfataricus P2.</title>
        <authorList>
            <person name="She Q."/>
            <person name="Singh R.K."/>
            <person name="Confalonieri F."/>
            <person name="Zivanovic Y."/>
            <person name="Allard G."/>
            <person name="Awayez M.J."/>
            <person name="Chan-Weiher C.C.-Y."/>
            <person name="Clausen I.G."/>
            <person name="Curtis B.A."/>
            <person name="De Moors A."/>
            <person name="Erauso G."/>
            <person name="Fletcher C."/>
            <person name="Gordon P.M.K."/>
            <person name="Heikamp-de Jong I."/>
            <person name="Jeffries A.C."/>
            <person name="Kozera C.J."/>
            <person name="Medina N."/>
            <person name="Peng X."/>
            <person name="Thi-Ngoc H.P."/>
            <person name="Redder P."/>
            <person name="Schenk M.E."/>
            <person name="Theriault C."/>
            <person name="Tolstrup N."/>
            <person name="Charlebois R.L."/>
            <person name="Doolittle W.F."/>
            <person name="Duguet M."/>
            <person name="Gaasterland T."/>
            <person name="Garrett R.A."/>
            <person name="Ragan M.A."/>
            <person name="Sensen C.W."/>
            <person name="Van der Oost J."/>
        </authorList>
    </citation>
    <scope>NUCLEOTIDE SEQUENCE [LARGE SCALE GENOMIC DNA]</scope>
    <source>
        <strain>ATCC 35092 / DSM 1617 / JCM 11322 / P2</strain>
    </source>
</reference>
<reference key="2">
    <citation type="journal article" date="1999" name="J. Bacteriol.">
        <title>Glucose transport in the extremely thermoacidophilic Sulfolobus solfataricus involves a high-affinity membrane-integrated binding protein.</title>
        <authorList>
            <person name="Albers S.V."/>
            <person name="Elferink M.G."/>
            <person name="Charlebois R.L."/>
            <person name="Sensen C.W."/>
            <person name="Driessen A.J."/>
            <person name="Konings W.N."/>
        </authorList>
    </citation>
    <scope>PROTEIN SEQUENCE OF 13-43</scope>
    <scope>FUNCTION</scope>
    <scope>ACTIVITY REGULATION</scope>
    <scope>BIOPHYSICOCHEMICAL PROPERTIES</scope>
    <scope>SUBUNIT</scope>
    <scope>SUBCELLULAR LOCATION</scope>
</reference>
<reference key="3">
    <citation type="journal article" date="2001" name="Mol. Microbiol.">
        <title>Sugar transport in Sulfolobus solfataricus is mediated by two families of binding protein-dependent ABC transporters.</title>
        <authorList>
            <person name="Elferink M.G."/>
            <person name="Albers S.V."/>
            <person name="Konings W.N."/>
            <person name="Driessen A.J."/>
        </authorList>
    </citation>
    <scope>NOMENCLATURE</scope>
    <scope>FUNCTION</scope>
</reference>
<gene>
    <name evidence="5" type="primary">glcS</name>
    <name evidence="9" type="ordered locus">SSO2847</name>
</gene>
<sequence length="554" mass="61128">MKRKYPYSLAKGLTSTQIAVIVAVIVIVIIIGVVAGFVLTKGPSTTAVTTTVTSTFTTTTTIPSTTTSTPSNTVVFYTWWGGGDGGEALSQIIPAVKQYAGLQMQTYSIPGAGGTNAKYAILALIQAGKPPAAFQVHYGPEMISYVEAAPNGIHTFVNMTPYLIQWGLLNNAVYAVLQAGAYNGTLLSVPINVHRGAVLYVNTQLLREYNLPFPYNFSTLVYDTVQLANHGVSPWIIPGGDGGWDQFNVWEDIFLYLAGPQLYNELIYGTLNFSNPTVQKLINETNYWFLNFTSYNYPGWQSMSWEQAFALIAQGKVAFQANGNWVTNYASYINVTVYPPLPQYISNSSVSVVETPFPGTQHYYALVIDTIGIPVGPQEQQALQLAHFWSSYQGQEVWTKYKAVTYYKNGTDWYAQPAQWYDYQQLINTSEQNFVYQLSDGGVFDDVFAQIDSGLLTLQQVGKVGLSAWNSTLVSSMQQEQNEWLAAAKLGLGYLGFPGHPFAGYYPPWVTNPSAYGLTNNTQKTSNSVMLFLLPFLALPLAIASIDNKYYLLK</sequence>
<feature type="chain" id="PRO_0000447612" description="Glucose-binding protein GlcS">
    <location>
        <begin position="1"/>
        <end position="554"/>
    </location>
</feature>
<feature type="topological domain" description="Cytoplasmic" evidence="7">
    <location>
        <begin position="1"/>
        <end position="17"/>
    </location>
</feature>
<feature type="transmembrane region" description="Helical" evidence="1">
    <location>
        <begin position="18"/>
        <end position="38"/>
    </location>
</feature>
<feature type="topological domain" description="Extracellular" evidence="7">
    <location>
        <begin position="39"/>
        <end position="525"/>
    </location>
</feature>
<feature type="transmembrane region" description="Helical" evidence="1">
    <location>
        <begin position="526"/>
        <end position="546"/>
    </location>
</feature>
<feature type="topological domain" description="Cytoplasmic" evidence="7">
    <location>
        <begin position="547"/>
        <end position="554"/>
    </location>
</feature>
<organism>
    <name type="scientific">Saccharolobus solfataricus (strain ATCC 35092 / DSM 1617 / JCM 11322 / P2)</name>
    <name type="common">Sulfolobus solfataricus</name>
    <dbReference type="NCBI Taxonomy" id="273057"/>
    <lineage>
        <taxon>Archaea</taxon>
        <taxon>Thermoproteota</taxon>
        <taxon>Thermoprotei</taxon>
        <taxon>Sulfolobales</taxon>
        <taxon>Sulfolobaceae</taxon>
        <taxon>Saccharolobus</taxon>
    </lineage>
</organism>
<name>GLCS_SACS2</name>
<proteinExistence type="evidence at protein level"/>
<protein>
    <recommendedName>
        <fullName evidence="6">Glucose-binding protein GlcS</fullName>
        <shortName evidence="4">GBP</shortName>
    </recommendedName>
</protein>
<keyword id="KW-1003">Cell membrane</keyword>
<keyword id="KW-0903">Direct protein sequencing</keyword>
<keyword id="KW-0472">Membrane</keyword>
<keyword id="KW-1185">Reference proteome</keyword>
<keyword id="KW-0762">Sugar transport</keyword>
<keyword id="KW-0812">Transmembrane</keyword>
<keyword id="KW-1133">Transmembrane helix</keyword>
<keyword id="KW-0813">Transport</keyword>
<evidence type="ECO:0000255" key="1"/>
<evidence type="ECO:0000269" key="2">
    <source>
    </source>
</evidence>
<evidence type="ECO:0000269" key="3">
    <source>
    </source>
</evidence>
<evidence type="ECO:0000303" key="4">
    <source>
    </source>
</evidence>
<evidence type="ECO:0000303" key="5">
    <source>
    </source>
</evidence>
<evidence type="ECO:0000305" key="6"/>
<evidence type="ECO:0000305" key="7">
    <source>
    </source>
</evidence>
<evidence type="ECO:0000305" key="8">
    <source>
    </source>
</evidence>
<evidence type="ECO:0000312" key="9">
    <source>
        <dbReference type="EMBL" id="AAK42957.1"/>
    </source>
</evidence>
<comment type="function">
    <text evidence="2 3 7 8">Part of the ABC transporter complex GlcSTUV involved in glucose uptake (Probable). Binds glucose. Can also bind galactose and mannose (PubMed:10400586, PubMed:11260467).</text>
</comment>
<comment type="activity regulation">
    <text evidence="2">Binding of glucose is strongly inhibited by galactose and mannose.</text>
</comment>
<comment type="biophysicochemical properties">
    <phDependence>
        <text evidence="2">Optimum pH is 1.5.</text>
    </phDependence>
</comment>
<comment type="subunit">
    <text evidence="7">The complex is composed of two ATP-binding proteins (GlcV), two transmembrane proteins (GlcT and GlcU) and a solute-binding protein (GlcS).</text>
</comment>
<comment type="subcellular location">
    <subcellularLocation>
        <location evidence="7">Cell membrane</location>
        <topology evidence="1">Multi-pass membrane protein</topology>
        <orientation evidence="7">Extracellular side</orientation>
    </subcellularLocation>
</comment>
<comment type="similarity">
    <text evidence="6">Belongs to the bacterial solute-binding protein 1 family.</text>
</comment>